<dbReference type="EMBL" id="CP017627">
    <property type="protein sequence ID" value="AOW29654.1"/>
    <property type="molecule type" value="Genomic_DNA"/>
</dbReference>
<dbReference type="RefSeq" id="XP_720544.2">
    <property type="nucleotide sequence ID" value="XM_715451.2"/>
</dbReference>
<dbReference type="SMR" id="Q5AGE5"/>
<dbReference type="EnsemblFungi" id="C5_02280C_A-T">
    <property type="protein sequence ID" value="C5_02280C_A-T-p1"/>
    <property type="gene ID" value="C5_02280C_A"/>
</dbReference>
<dbReference type="GeneID" id="3637712"/>
<dbReference type="KEGG" id="cal:CAALFM_C502280CA"/>
<dbReference type="CGD" id="CAL0000181530">
    <property type="gene designation" value="orf19.11709"/>
</dbReference>
<dbReference type="VEuPathDB" id="FungiDB:C5_02280C_A"/>
<dbReference type="eggNOG" id="KOG2676">
    <property type="taxonomic scope" value="Eukaryota"/>
</dbReference>
<dbReference type="HOGENOM" id="CLU_043683_0_0_1"/>
<dbReference type="InParanoid" id="Q5AGE5"/>
<dbReference type="OrthoDB" id="379794at2759"/>
<dbReference type="PRO" id="PR:Q5AGE5"/>
<dbReference type="Proteomes" id="UP000000559">
    <property type="component" value="Chromosome 5"/>
</dbReference>
<dbReference type="GO" id="GO:0005829">
    <property type="term" value="C:cytosol"/>
    <property type="evidence" value="ECO:0000318"/>
    <property type="project" value="GO_Central"/>
</dbReference>
<dbReference type="GO" id="GO:0051301">
    <property type="term" value="P:cell division"/>
    <property type="evidence" value="ECO:0007669"/>
    <property type="project" value="UniProtKB-KW"/>
</dbReference>
<dbReference type="Gene3D" id="1.25.10.10">
    <property type="entry name" value="Leucine-rich Repeat Variant"/>
    <property type="match status" value="1"/>
</dbReference>
<dbReference type="InterPro" id="IPR011989">
    <property type="entry name" value="ARM-like"/>
</dbReference>
<dbReference type="InterPro" id="IPR016024">
    <property type="entry name" value="ARM-type_fold"/>
</dbReference>
<dbReference type="InterPro" id="IPR051374">
    <property type="entry name" value="Ataxin-10/CTR86_families"/>
</dbReference>
<dbReference type="InterPro" id="IPR019156">
    <property type="entry name" value="Ataxin-10_domain"/>
</dbReference>
<dbReference type="PANTHER" id="PTHR13255">
    <property type="entry name" value="ATAXIN-10"/>
    <property type="match status" value="1"/>
</dbReference>
<dbReference type="PANTHER" id="PTHR13255:SF0">
    <property type="entry name" value="ATAXIN-10"/>
    <property type="match status" value="1"/>
</dbReference>
<dbReference type="Pfam" id="PF09759">
    <property type="entry name" value="Atx10homo_assoc"/>
    <property type="match status" value="1"/>
</dbReference>
<dbReference type="SUPFAM" id="SSF48371">
    <property type="entry name" value="ARM repeat"/>
    <property type="match status" value="1"/>
</dbReference>
<comment type="function">
    <text evidence="2">May play a role in the regulation of cytokinesis.</text>
</comment>
<comment type="subcellular location">
    <subcellularLocation>
        <location evidence="1">Cytoplasm</location>
    </subcellularLocation>
</comment>
<comment type="similarity">
    <text evidence="3">Belongs to the ataxin-10 family.</text>
</comment>
<reference key="1">
    <citation type="journal article" date="2004" name="Proc. Natl. Acad. Sci. U.S.A.">
        <title>The diploid genome sequence of Candida albicans.</title>
        <authorList>
            <person name="Jones T."/>
            <person name="Federspiel N.A."/>
            <person name="Chibana H."/>
            <person name="Dungan J."/>
            <person name="Kalman S."/>
            <person name="Magee B.B."/>
            <person name="Newport G."/>
            <person name="Thorstenson Y.R."/>
            <person name="Agabian N."/>
            <person name="Magee P.T."/>
            <person name="Davis R.W."/>
            <person name="Scherer S."/>
        </authorList>
    </citation>
    <scope>NUCLEOTIDE SEQUENCE [LARGE SCALE GENOMIC DNA]</scope>
    <source>
        <strain>SC5314 / ATCC MYA-2876</strain>
    </source>
</reference>
<reference key="2">
    <citation type="journal article" date="2007" name="Genome Biol.">
        <title>Assembly of the Candida albicans genome into sixteen supercontigs aligned on the eight chromosomes.</title>
        <authorList>
            <person name="van het Hoog M."/>
            <person name="Rast T.J."/>
            <person name="Martchenko M."/>
            <person name="Grindle S."/>
            <person name="Dignard D."/>
            <person name="Hogues H."/>
            <person name="Cuomo C."/>
            <person name="Berriman M."/>
            <person name="Scherer S."/>
            <person name="Magee B.B."/>
            <person name="Whiteway M."/>
            <person name="Chibana H."/>
            <person name="Nantel A."/>
            <person name="Magee P.T."/>
        </authorList>
    </citation>
    <scope>GENOME REANNOTATION</scope>
    <source>
        <strain>SC5314 / ATCC MYA-2876</strain>
    </source>
</reference>
<reference key="3">
    <citation type="journal article" date="2013" name="Genome Biol.">
        <title>Assembly of a phased diploid Candida albicans genome facilitates allele-specific measurements and provides a simple model for repeat and indel structure.</title>
        <authorList>
            <person name="Muzzey D."/>
            <person name="Schwartz K."/>
            <person name="Weissman J.S."/>
            <person name="Sherlock G."/>
        </authorList>
    </citation>
    <scope>NUCLEOTIDE SEQUENCE [LARGE SCALE GENOMIC DNA]</scope>
    <scope>GENOME REANNOTATION</scope>
    <source>
        <strain>SC5314 / ATCC MYA-2876</strain>
    </source>
</reference>
<feature type="chain" id="PRO_0000280686" description="Ataxin-10 homolog">
    <location>
        <begin position="1"/>
        <end position="463"/>
    </location>
</feature>
<keyword id="KW-0131">Cell cycle</keyword>
<keyword id="KW-0132">Cell division</keyword>
<keyword id="KW-0963">Cytoplasm</keyword>
<keyword id="KW-1185">Reference proteome</keyword>
<evidence type="ECO:0000250" key="1">
    <source>
        <dbReference type="UniProtKB" id="P25355"/>
    </source>
</evidence>
<evidence type="ECO:0000250" key="2">
    <source>
        <dbReference type="UniProtKB" id="Q9UBB4"/>
    </source>
</evidence>
<evidence type="ECO:0000305" key="3"/>
<name>ATX10_CANAL</name>
<protein>
    <recommendedName>
        <fullName evidence="3">Ataxin-10 homolog</fullName>
    </recommendedName>
    <alternativeName>
        <fullName>Copper transport protein 86</fullName>
    </alternativeName>
</protein>
<gene>
    <name type="primary">CTR86</name>
    <name type="ordered locus">CAALFM_C502280CA</name>
    <name type="ORF">CaO19.11709</name>
    <name type="ORF">CaO19.4234</name>
</gene>
<accession>Q5AGE5</accession>
<accession>A0A1D8PND5</accession>
<organism>
    <name type="scientific">Candida albicans (strain SC5314 / ATCC MYA-2876)</name>
    <name type="common">Yeast</name>
    <dbReference type="NCBI Taxonomy" id="237561"/>
    <lineage>
        <taxon>Eukaryota</taxon>
        <taxon>Fungi</taxon>
        <taxon>Dikarya</taxon>
        <taxon>Ascomycota</taxon>
        <taxon>Saccharomycotina</taxon>
        <taxon>Pichiomycetes</taxon>
        <taxon>Debaryomycetaceae</taxon>
        <taxon>Candida/Lodderomyces clade</taxon>
        <taxon>Candida</taxon>
    </lineage>
</organism>
<proteinExistence type="inferred from homology"/>
<sequence>MTDIDIDTIINRSLHALENSEYSEFDLLLNQLSYLIKQSVNSNNKTASKEQITRILDYTPNNFNQVESLRLYRGLLILVRNFAPLLDIDLFPIVANSFEKFLKALNQTSEWTDRIIEVYWQILANFQRNEFTEVANEFFGQWESKYKWKDIPVSVMSPVIHFLFRQFNTQDPHITNENLLSLLKLFETNHVMNAVYEIFTMIDFADTNNIGHDNKMFIHLLYDIITHESFQKWIEQQNEEETITKWLSLTSVIVQTKTDWNNYELIALLSWNGSLFMKYAPLINSNCNTTVNGEDDFGYVEDDISAITAIFAELSQFNATKQYFEHYEDLLPKLIFVFKWIHDNIEPITIKSSKIEEVGRYSSVKTNIITILSYLSYDSFQFQEKIRELGGLSLVLSNCIIDNNNPFIKEQAIVCLKYLLQKNPKNQQFVADLEAKKVVDDQVLSEVGYQVEVIDGKVAVKRK</sequence>